<organism>
    <name type="scientific">Homo sapiens</name>
    <name type="common">Human</name>
    <dbReference type="NCBI Taxonomy" id="9606"/>
    <lineage>
        <taxon>Eukaryota</taxon>
        <taxon>Metazoa</taxon>
        <taxon>Chordata</taxon>
        <taxon>Craniata</taxon>
        <taxon>Vertebrata</taxon>
        <taxon>Euteleostomi</taxon>
        <taxon>Mammalia</taxon>
        <taxon>Eutheria</taxon>
        <taxon>Euarchontoglires</taxon>
        <taxon>Primates</taxon>
        <taxon>Haplorrhini</taxon>
        <taxon>Catarrhini</taxon>
        <taxon>Hominidae</taxon>
        <taxon>Homo</taxon>
    </lineage>
</organism>
<comment type="function">
    <text evidence="1 6 7 8">Protein-lysine N-methyltransferase that methylates both histones and non-histone proteins (PubMed:31308046, PubMed:35545041, PubMed:37926288). Via its catalytic activity, regulates many processes, including cell proliferation, cell differentiation, inflammatory response and apoptosis. Regulates the inflammatory response by mediating mono- and dimethylation of 'Lys-4' of histone H3 (H3K4me1 and H3K4me2, respectively), leading to activate the transcription of pro-inflammatory cytokines IL6 and TNF-alpha (By similarity). Through the catalysis of TBK1 monomethylation, may regulate virus-induced interferon signaling. TBK1 monomethylation enhances its interaction with MAVS, STING and IRF3, hence promoting antiviral interferon signaling (PubMed:37926288). Also involved in the regulation of stem cell quiescence by catalyzing the trimethylation of 'Lys-20' of histone H4 (H4K20me3), thereby promoting heterochromatin formation (PubMed:31308046). In the brain, epigenetically controls quiescence of neural stem cells for sustaining a protected neural stem cell population and maintaining a stem cell reservoir for neurogenesis (By similarity). Involved in proliferation, migration, paracrine and myogenic differentiation of bone marrow mesenchymal stem cells (BMSCs) (By similarity). Through the catalysis of XRCC5/Ku70 trimethylation, regulates BAX-mediated apoptosis. SETD4-catalyzed XRCC5 methylation results in XRCC5 translocation to the cytoplasm, where it interacts with BAX, sequestering it from the mitochondria, hence preventing BAX-mediated apoptosis (PubMed:35545041).</text>
</comment>
<comment type="catalytic activity">
    <reaction evidence="1">
        <text>L-lysyl(4)-[histone H3] + S-adenosyl-L-methionine = N(6)-methyl-L-lysyl(4)-[histone H3] + S-adenosyl-L-homocysteine + H(+)</text>
        <dbReference type="Rhea" id="RHEA:60264"/>
        <dbReference type="Rhea" id="RHEA-COMP:15543"/>
        <dbReference type="Rhea" id="RHEA-COMP:15547"/>
        <dbReference type="ChEBI" id="CHEBI:15378"/>
        <dbReference type="ChEBI" id="CHEBI:29969"/>
        <dbReference type="ChEBI" id="CHEBI:57856"/>
        <dbReference type="ChEBI" id="CHEBI:59789"/>
        <dbReference type="ChEBI" id="CHEBI:61929"/>
        <dbReference type="EC" id="2.1.1.364"/>
    </reaction>
</comment>
<comment type="catalytic activity">
    <reaction evidence="1">
        <text>N(6)-methyl-L-lysyl(4)-[histone H3] + S-adenosyl-L-methionine = N(6),N(6)-dimethyl-L-lysyl(4)-[histone H3] + S-adenosyl-L-homocysteine + H(+)</text>
        <dbReference type="Rhea" id="RHEA:60268"/>
        <dbReference type="Rhea" id="RHEA-COMP:15540"/>
        <dbReference type="Rhea" id="RHEA-COMP:15543"/>
        <dbReference type="ChEBI" id="CHEBI:15378"/>
        <dbReference type="ChEBI" id="CHEBI:57856"/>
        <dbReference type="ChEBI" id="CHEBI:59789"/>
        <dbReference type="ChEBI" id="CHEBI:61929"/>
        <dbReference type="ChEBI" id="CHEBI:61976"/>
    </reaction>
</comment>
<comment type="catalytic activity">
    <reaction evidence="6">
        <text>L-lysyl(20)-[histone H4] + S-adenosyl-L-methionine = N(6)-methyl-L-lysyl(20)-[histone H4] + S-adenosyl-L-homocysteine + H(+)</text>
        <dbReference type="Rhea" id="RHEA:60344"/>
        <dbReference type="Rhea" id="RHEA-COMP:15554"/>
        <dbReference type="Rhea" id="RHEA-COMP:15555"/>
        <dbReference type="ChEBI" id="CHEBI:15378"/>
        <dbReference type="ChEBI" id="CHEBI:29969"/>
        <dbReference type="ChEBI" id="CHEBI:57856"/>
        <dbReference type="ChEBI" id="CHEBI:59789"/>
        <dbReference type="ChEBI" id="CHEBI:61929"/>
    </reaction>
</comment>
<comment type="catalytic activity">
    <reaction evidence="6">
        <text>N(6)-methyl-L-lysyl(20)-[histone H4] + S-adenosyl-L-methionine = N(6),N(6)-dimethyl-L-lysyl(20)-[histone H4] + S-adenosyl-L-homocysteine + H(+)</text>
        <dbReference type="Rhea" id="RHEA:60348"/>
        <dbReference type="Rhea" id="RHEA-COMP:15555"/>
        <dbReference type="Rhea" id="RHEA-COMP:15556"/>
        <dbReference type="ChEBI" id="CHEBI:15378"/>
        <dbReference type="ChEBI" id="CHEBI:57856"/>
        <dbReference type="ChEBI" id="CHEBI:59789"/>
        <dbReference type="ChEBI" id="CHEBI:61929"/>
        <dbReference type="ChEBI" id="CHEBI:61976"/>
    </reaction>
</comment>
<comment type="catalytic activity">
    <reaction evidence="6">
        <text>N(6),N(6)-dimethyl-L-lysyl(20)-[histone H4] + S-adenosyl-L-methionine = N(6),N(6),N(6)-trimethyl-L-lysyl(20)-[histone H4] + S-adenosyl-L-homocysteine + H(+)</text>
        <dbReference type="Rhea" id="RHEA:61992"/>
        <dbReference type="Rhea" id="RHEA-COMP:15556"/>
        <dbReference type="Rhea" id="RHEA-COMP:15998"/>
        <dbReference type="ChEBI" id="CHEBI:15378"/>
        <dbReference type="ChEBI" id="CHEBI:57856"/>
        <dbReference type="ChEBI" id="CHEBI:59789"/>
        <dbReference type="ChEBI" id="CHEBI:61961"/>
        <dbReference type="ChEBI" id="CHEBI:61976"/>
    </reaction>
</comment>
<comment type="catalytic activity">
    <reaction evidence="7 8">
        <text>L-lysyl-[protein] + S-adenosyl-L-methionine = N(6)-methyl-L-lysyl-[protein] + S-adenosyl-L-homocysteine + H(+)</text>
        <dbReference type="Rhea" id="RHEA:51736"/>
        <dbReference type="Rhea" id="RHEA-COMP:9752"/>
        <dbReference type="Rhea" id="RHEA-COMP:13053"/>
        <dbReference type="ChEBI" id="CHEBI:15378"/>
        <dbReference type="ChEBI" id="CHEBI:29969"/>
        <dbReference type="ChEBI" id="CHEBI:57856"/>
        <dbReference type="ChEBI" id="CHEBI:59789"/>
        <dbReference type="ChEBI" id="CHEBI:61929"/>
    </reaction>
</comment>
<comment type="subunit">
    <text evidence="8">Forms a ternary complex with TBK1 and ZNF268; the interaction with TBK1 is ZNF268-dependent and leads to TBK1 monomethylation.</text>
</comment>
<comment type="interaction">
    <interactant intactId="EBI-23709068">
        <id>Q9NVD3-4</id>
    </interactant>
    <interactant intactId="EBI-752069">
        <id>Q9H5X1</id>
        <label>CIAO2A</label>
    </interactant>
    <organismsDiffer>false</organismsDiffer>
    <experiments>3</experiments>
</comment>
<comment type="subcellular location">
    <subcellularLocation>
        <location evidence="5 8">Cytoplasm</location>
        <location evidence="5 8">Cytosol</location>
    </subcellularLocation>
    <subcellularLocation>
        <location evidence="5">Nucleus</location>
    </subcellularLocation>
</comment>
<comment type="alternative products">
    <event type="alternative splicing"/>
    <isoform>
        <id>Q9NVD3-1</id>
        <name>A</name>
        <sequence type="displayed"/>
    </isoform>
    <isoform>
        <id>Q9NVD3-2</id>
        <name>B</name>
        <sequence type="described" ref="VSP_004146"/>
    </isoform>
    <isoform>
        <id>Q9NVD3-3</id>
        <name>3</name>
        <sequence type="described" ref="VSP_026578"/>
    </isoform>
    <isoform>
        <id>Q9NVD3-4</id>
        <name>4</name>
        <sequence type="described" ref="VSP_054087 VSP_054088"/>
    </isoform>
</comment>
<comment type="miscellaneous">
    <molecule>Isoform B</molecule>
    <text evidence="13">May be produced at very low levels due to a premature stop codon in the mRNA, leading to nonsense-mediated mRNA decay.</text>
</comment>
<comment type="similarity">
    <text evidence="2 13">Belongs to the class V-like SAM-binding methyltransferase superfamily. SETD4 family.</text>
</comment>
<gene>
    <name evidence="12 14" type="primary">SETD4</name>
    <name evidence="14" type="synonym">C21orf18</name>
    <name evidence="14" type="synonym">C21orf27</name>
</gene>
<name>SETD4_HUMAN</name>
<accession>Q9NVD3</accession>
<accession>B4DT14</accession>
<accession>D3DSG2</accession>
<accession>D3DSG4</accession>
<accession>Q8NE19</accession>
<accession>Q9BU46</accession>
<dbReference type="EC" id="2.1.1.-" evidence="6"/>
<dbReference type="EC" id="2.1.1.364" evidence="1"/>
<dbReference type="EMBL" id="AF391112">
    <property type="protein sequence ID" value="AAL34503.1"/>
    <property type="molecule type" value="mRNA"/>
</dbReference>
<dbReference type="EMBL" id="AK001660">
    <property type="protein sequence ID" value="BAA91819.1"/>
    <property type="molecule type" value="mRNA"/>
</dbReference>
<dbReference type="EMBL" id="AK300009">
    <property type="protein sequence ID" value="BAG61826.1"/>
    <property type="molecule type" value="mRNA"/>
</dbReference>
<dbReference type="EMBL" id="AP000688">
    <property type="status" value="NOT_ANNOTATED_CDS"/>
    <property type="molecule type" value="Genomic_DNA"/>
</dbReference>
<dbReference type="EMBL" id="CH471079">
    <property type="protein sequence ID" value="EAX09757.1"/>
    <property type="molecule type" value="Genomic_DNA"/>
</dbReference>
<dbReference type="EMBL" id="CH471079">
    <property type="protein sequence ID" value="EAX09758.1"/>
    <property type="molecule type" value="Genomic_DNA"/>
</dbReference>
<dbReference type="EMBL" id="CH471079">
    <property type="protein sequence ID" value="EAX09759.1"/>
    <property type="molecule type" value="Genomic_DNA"/>
</dbReference>
<dbReference type="EMBL" id="CH471079">
    <property type="protein sequence ID" value="EAX09760.1"/>
    <property type="molecule type" value="Genomic_DNA"/>
</dbReference>
<dbReference type="EMBL" id="CH471079">
    <property type="protein sequence ID" value="EAX09762.1"/>
    <property type="molecule type" value="Genomic_DNA"/>
</dbReference>
<dbReference type="EMBL" id="BC002898">
    <property type="protein sequence ID" value="AAH02898.1"/>
    <property type="molecule type" value="mRNA"/>
</dbReference>
<dbReference type="EMBL" id="BC036556">
    <property type="protein sequence ID" value="AAH36556.1"/>
    <property type="molecule type" value="mRNA"/>
</dbReference>
<dbReference type="CCDS" id="CCDS13640.1">
    <molecule id="Q9NVD3-1"/>
</dbReference>
<dbReference type="CCDS" id="CCDS42923.1">
    <molecule id="Q9NVD3-4"/>
</dbReference>
<dbReference type="CCDS" id="CCDS74792.1">
    <molecule id="Q9NVD3-3"/>
</dbReference>
<dbReference type="RefSeq" id="NP_001007260.1">
    <molecule id="Q9NVD3-4"/>
    <property type="nucleotide sequence ID" value="NM_001007259.3"/>
</dbReference>
<dbReference type="RefSeq" id="NP_001007262.1">
    <property type="nucleotide sequence ID" value="NM_001007261.2"/>
</dbReference>
<dbReference type="RefSeq" id="NP_001273681.1">
    <molecule id="Q9NVD3-3"/>
    <property type="nucleotide sequence ID" value="NM_001286752.2"/>
</dbReference>
<dbReference type="RefSeq" id="NP_059134.1">
    <molecule id="Q9NVD3-1"/>
    <property type="nucleotide sequence ID" value="NM_017438.5"/>
</dbReference>
<dbReference type="RefSeq" id="XP_011527938.1">
    <molecule id="Q9NVD3-1"/>
    <property type="nucleotide sequence ID" value="XM_011529636.3"/>
</dbReference>
<dbReference type="RefSeq" id="XP_011527939.1">
    <molecule id="Q9NVD3-1"/>
    <property type="nucleotide sequence ID" value="XM_011529637.3"/>
</dbReference>
<dbReference type="RefSeq" id="XP_011527940.1">
    <molecule id="Q9NVD3-1"/>
    <property type="nucleotide sequence ID" value="XM_011529638.3"/>
</dbReference>
<dbReference type="RefSeq" id="XP_011527941.1">
    <molecule id="Q9NVD3-1"/>
    <property type="nucleotide sequence ID" value="XM_011529639.2"/>
</dbReference>
<dbReference type="RefSeq" id="XP_011527942.1">
    <molecule id="Q9NVD3-1"/>
    <property type="nucleotide sequence ID" value="XM_011529640.4"/>
</dbReference>
<dbReference type="RefSeq" id="XP_011527944.1">
    <property type="nucleotide sequence ID" value="XM_011529642.1"/>
</dbReference>
<dbReference type="RefSeq" id="XP_011527945.1">
    <molecule id="Q9NVD3-3"/>
    <property type="nucleotide sequence ID" value="XM_011529643.2"/>
</dbReference>
<dbReference type="RefSeq" id="XP_011527946.1">
    <molecule id="Q9NVD3-3"/>
    <property type="nucleotide sequence ID" value="XM_011529644.2"/>
</dbReference>
<dbReference type="RefSeq" id="XP_016883892.1">
    <property type="nucleotide sequence ID" value="XM_017028403.1"/>
</dbReference>
<dbReference type="RefSeq" id="XP_016883893.1">
    <property type="nucleotide sequence ID" value="XM_017028404.1"/>
</dbReference>
<dbReference type="RefSeq" id="XP_016883894.1">
    <molecule id="Q9NVD3-4"/>
    <property type="nucleotide sequence ID" value="XM_017028405.3"/>
</dbReference>
<dbReference type="RefSeq" id="XP_047296860.1">
    <molecule id="Q9NVD3-1"/>
    <property type="nucleotide sequence ID" value="XM_047440904.1"/>
</dbReference>
<dbReference type="RefSeq" id="XP_047296861.1">
    <molecule id="Q9NVD3-1"/>
    <property type="nucleotide sequence ID" value="XM_047440905.1"/>
</dbReference>
<dbReference type="RefSeq" id="XP_047296862.1">
    <molecule id="Q9NVD3-3"/>
    <property type="nucleotide sequence ID" value="XM_047440906.1"/>
</dbReference>
<dbReference type="RefSeq" id="XP_047296863.1">
    <molecule id="Q9NVD3-3"/>
    <property type="nucleotide sequence ID" value="XM_047440907.1"/>
</dbReference>
<dbReference type="RefSeq" id="XP_054180645.1">
    <molecule id="Q9NVD3-1"/>
    <property type="nucleotide sequence ID" value="XM_054324670.1"/>
</dbReference>
<dbReference type="RefSeq" id="XP_054180646.1">
    <molecule id="Q9NVD3-1"/>
    <property type="nucleotide sequence ID" value="XM_054324671.1"/>
</dbReference>
<dbReference type="RefSeq" id="XP_054180647.1">
    <molecule id="Q9NVD3-1"/>
    <property type="nucleotide sequence ID" value="XM_054324672.1"/>
</dbReference>
<dbReference type="RefSeq" id="XP_054180648.1">
    <molecule id="Q9NVD3-1"/>
    <property type="nucleotide sequence ID" value="XM_054324673.1"/>
</dbReference>
<dbReference type="RefSeq" id="XP_054180649.1">
    <molecule id="Q9NVD3-1"/>
    <property type="nucleotide sequence ID" value="XM_054324674.1"/>
</dbReference>
<dbReference type="RefSeq" id="XP_054180650.1">
    <molecule id="Q9NVD3-1"/>
    <property type="nucleotide sequence ID" value="XM_054324675.1"/>
</dbReference>
<dbReference type="RefSeq" id="XP_054180651.1">
    <molecule id="Q9NVD3-1"/>
    <property type="nucleotide sequence ID" value="XM_054324676.1"/>
</dbReference>
<dbReference type="RefSeq" id="XP_054180652.1">
    <molecule id="Q9NVD3-3"/>
    <property type="nucleotide sequence ID" value="XM_054324677.1"/>
</dbReference>
<dbReference type="RefSeq" id="XP_054180653.1">
    <molecule id="Q9NVD3-3"/>
    <property type="nucleotide sequence ID" value="XM_054324678.1"/>
</dbReference>
<dbReference type="RefSeq" id="XP_054180654.1">
    <molecule id="Q9NVD3-3"/>
    <property type="nucleotide sequence ID" value="XM_054324679.1"/>
</dbReference>
<dbReference type="RefSeq" id="XP_054180655.1">
    <molecule id="Q9NVD3-3"/>
    <property type="nucleotide sequence ID" value="XM_054324680.1"/>
</dbReference>
<dbReference type="RefSeq" id="XP_054180658.1">
    <molecule id="Q9NVD3-4"/>
    <property type="nucleotide sequence ID" value="XM_054324683.1"/>
</dbReference>
<dbReference type="SMR" id="Q9NVD3"/>
<dbReference type="BioGRID" id="119892">
    <property type="interactions" value="21"/>
</dbReference>
<dbReference type="FunCoup" id="Q9NVD3">
    <property type="interactions" value="1922"/>
</dbReference>
<dbReference type="IntAct" id="Q9NVD3">
    <property type="interactions" value="17"/>
</dbReference>
<dbReference type="MINT" id="Q9NVD3"/>
<dbReference type="STRING" id="9606.ENSP00000382163"/>
<dbReference type="iPTMnet" id="Q9NVD3"/>
<dbReference type="PhosphoSitePlus" id="Q9NVD3"/>
<dbReference type="BioMuta" id="SETD4"/>
<dbReference type="DMDM" id="12229715"/>
<dbReference type="jPOST" id="Q9NVD3"/>
<dbReference type="MassIVE" id="Q9NVD3"/>
<dbReference type="PaxDb" id="9606-ENSP00000382163"/>
<dbReference type="PeptideAtlas" id="Q9NVD3"/>
<dbReference type="ProteomicsDB" id="82779">
    <molecule id="Q9NVD3-1"/>
</dbReference>
<dbReference type="ProteomicsDB" id="82781">
    <molecule id="Q9NVD3-3"/>
</dbReference>
<dbReference type="Antibodypedia" id="8172">
    <property type="antibodies" value="115 antibodies from 21 providers"/>
</dbReference>
<dbReference type="DNASU" id="54093"/>
<dbReference type="Ensembl" id="ENST00000332131.9">
    <molecule id="Q9NVD3-1"/>
    <property type="protein sequence ID" value="ENSP00000329189.4"/>
    <property type="gene ID" value="ENSG00000185917.14"/>
</dbReference>
<dbReference type="Ensembl" id="ENST00000399207.5">
    <molecule id="Q9NVD3-4"/>
    <property type="protein sequence ID" value="ENSP00000382158.1"/>
    <property type="gene ID" value="ENSG00000185917.14"/>
</dbReference>
<dbReference type="Ensembl" id="ENST00000399208.6">
    <molecule id="Q9NVD3-4"/>
    <property type="protein sequence ID" value="ENSP00000382159.2"/>
    <property type="gene ID" value="ENSG00000185917.14"/>
</dbReference>
<dbReference type="Ensembl" id="ENST00000399212.5">
    <molecule id="Q9NVD3-3"/>
    <property type="protein sequence ID" value="ENSP00000382161.1"/>
    <property type="gene ID" value="ENSG00000185917.14"/>
</dbReference>
<dbReference type="Ensembl" id="ENST00000399215.5">
    <molecule id="Q9NVD3-1"/>
    <property type="protein sequence ID" value="ENSP00000382163.1"/>
    <property type="gene ID" value="ENSG00000185917.14"/>
</dbReference>
<dbReference type="GeneID" id="54093"/>
<dbReference type="KEGG" id="hsa:54093"/>
<dbReference type="MANE-Select" id="ENST00000332131.9">
    <property type="protein sequence ID" value="ENSP00000329189.4"/>
    <property type="RefSeq nucleotide sequence ID" value="NM_017438.5"/>
    <property type="RefSeq protein sequence ID" value="NP_059134.1"/>
</dbReference>
<dbReference type="UCSC" id="uc002yuw.3">
    <molecule id="Q9NVD3-1"/>
    <property type="organism name" value="human"/>
</dbReference>
<dbReference type="AGR" id="HGNC:1258"/>
<dbReference type="CTD" id="54093"/>
<dbReference type="DisGeNET" id="54093"/>
<dbReference type="GeneCards" id="SETD4"/>
<dbReference type="HGNC" id="HGNC:1258">
    <property type="gene designation" value="SETD4"/>
</dbReference>
<dbReference type="HPA" id="ENSG00000185917">
    <property type="expression patterns" value="Low tissue specificity"/>
</dbReference>
<dbReference type="MIM" id="620995">
    <property type="type" value="gene"/>
</dbReference>
<dbReference type="neXtProt" id="NX_Q9NVD3"/>
<dbReference type="OpenTargets" id="ENSG00000185917"/>
<dbReference type="PharmGKB" id="PA25814"/>
<dbReference type="VEuPathDB" id="HostDB:ENSG00000185917"/>
<dbReference type="eggNOG" id="KOG1337">
    <property type="taxonomic scope" value="Eukaryota"/>
</dbReference>
<dbReference type="GeneTree" id="ENSGT00940000153577"/>
<dbReference type="HOGENOM" id="CLU_029120_3_0_1"/>
<dbReference type="InParanoid" id="Q9NVD3"/>
<dbReference type="OMA" id="ISHMKDE"/>
<dbReference type="OrthoDB" id="341421at2759"/>
<dbReference type="PAN-GO" id="Q9NVD3">
    <property type="GO annotations" value="3 GO annotations based on evolutionary models"/>
</dbReference>
<dbReference type="PhylomeDB" id="Q9NVD3"/>
<dbReference type="TreeFam" id="TF106421"/>
<dbReference type="PathwayCommons" id="Q9NVD3"/>
<dbReference type="SignaLink" id="Q9NVD3"/>
<dbReference type="BioGRID-ORCS" id="54093">
    <property type="hits" value="15 hits in 1167 CRISPR screens"/>
</dbReference>
<dbReference type="ChiTaRS" id="SETD4">
    <property type="organism name" value="human"/>
</dbReference>
<dbReference type="GenomeRNAi" id="54093"/>
<dbReference type="Pharos" id="Q9NVD3">
    <property type="development level" value="Tbio"/>
</dbReference>
<dbReference type="PRO" id="PR:Q9NVD3"/>
<dbReference type="Proteomes" id="UP000005640">
    <property type="component" value="Chromosome 21"/>
</dbReference>
<dbReference type="RNAct" id="Q9NVD3">
    <property type="molecule type" value="protein"/>
</dbReference>
<dbReference type="Bgee" id="ENSG00000185917">
    <property type="expression patterns" value="Expressed in oocyte and 165 other cell types or tissues"/>
</dbReference>
<dbReference type="ExpressionAtlas" id="Q9NVD3">
    <property type="expression patterns" value="baseline and differential"/>
</dbReference>
<dbReference type="GO" id="GO:0005829">
    <property type="term" value="C:cytosol"/>
    <property type="evidence" value="ECO:0000314"/>
    <property type="project" value="UniProtKB"/>
</dbReference>
<dbReference type="GO" id="GO:0005634">
    <property type="term" value="C:nucleus"/>
    <property type="evidence" value="ECO:0000314"/>
    <property type="project" value="UniProtKB"/>
</dbReference>
<dbReference type="GO" id="GO:0046975">
    <property type="term" value="F:histone H3K36 methyltransferase activity"/>
    <property type="evidence" value="ECO:0000318"/>
    <property type="project" value="GO_Central"/>
</dbReference>
<dbReference type="GO" id="GO:0042800">
    <property type="term" value="F:histone H3K4 methyltransferase activity"/>
    <property type="evidence" value="ECO:0000250"/>
    <property type="project" value="UniProtKB"/>
</dbReference>
<dbReference type="GO" id="GO:0140945">
    <property type="term" value="F:histone H3K4 monomethyltransferase activity"/>
    <property type="evidence" value="ECO:0007669"/>
    <property type="project" value="UniProtKB-EC"/>
</dbReference>
<dbReference type="GO" id="GO:0042799">
    <property type="term" value="F:histone H4K20 methyltransferase activity"/>
    <property type="evidence" value="ECO:0000314"/>
    <property type="project" value="UniProtKB"/>
</dbReference>
<dbReference type="GO" id="GO:0140944">
    <property type="term" value="F:histone H4K20 monomethyltransferase activity"/>
    <property type="evidence" value="ECO:0007669"/>
    <property type="project" value="RHEA"/>
</dbReference>
<dbReference type="GO" id="GO:0140941">
    <property type="term" value="F:histone H4K20me methyltransferase activity"/>
    <property type="evidence" value="ECO:0007669"/>
    <property type="project" value="RHEA"/>
</dbReference>
<dbReference type="GO" id="GO:0003713">
    <property type="term" value="F:transcription coactivator activity"/>
    <property type="evidence" value="ECO:0000318"/>
    <property type="project" value="GO_Central"/>
</dbReference>
<dbReference type="GO" id="GO:0006338">
    <property type="term" value="P:chromatin remodeling"/>
    <property type="evidence" value="ECO:0000250"/>
    <property type="project" value="UniProtKB"/>
</dbReference>
<dbReference type="GO" id="GO:0006954">
    <property type="term" value="P:inflammatory response"/>
    <property type="evidence" value="ECO:0007669"/>
    <property type="project" value="UniProtKB-KW"/>
</dbReference>
<dbReference type="GO" id="GO:0032259">
    <property type="term" value="P:methylation"/>
    <property type="evidence" value="ECO:0007669"/>
    <property type="project" value="UniProtKB-KW"/>
</dbReference>
<dbReference type="GO" id="GO:0050729">
    <property type="term" value="P:positive regulation of inflammatory response"/>
    <property type="evidence" value="ECO:0000250"/>
    <property type="project" value="UniProtKB"/>
</dbReference>
<dbReference type="GO" id="GO:0032755">
    <property type="term" value="P:positive regulation of interleukin-6 production"/>
    <property type="evidence" value="ECO:0000250"/>
    <property type="project" value="UniProtKB"/>
</dbReference>
<dbReference type="GO" id="GO:0045944">
    <property type="term" value="P:positive regulation of transcription by RNA polymerase II"/>
    <property type="evidence" value="ECO:0000318"/>
    <property type="project" value="GO_Central"/>
</dbReference>
<dbReference type="GO" id="GO:0032760">
    <property type="term" value="P:positive regulation of tumor necrosis factor production"/>
    <property type="evidence" value="ECO:0000250"/>
    <property type="project" value="UniProtKB"/>
</dbReference>
<dbReference type="GO" id="GO:0071863">
    <property type="term" value="P:regulation of cell proliferation in bone marrow"/>
    <property type="evidence" value="ECO:0000250"/>
    <property type="project" value="UniProtKB"/>
</dbReference>
<dbReference type="CDD" id="cd19177">
    <property type="entry name" value="SET_SETD4"/>
    <property type="match status" value="1"/>
</dbReference>
<dbReference type="FunFam" id="3.90.1420.10:FF:000008">
    <property type="entry name" value="SET domain containing 4"/>
    <property type="match status" value="1"/>
</dbReference>
<dbReference type="FunFam" id="3.90.1410.10:FF:000002">
    <property type="entry name" value="SET domain-containing protein 4 isoform X1"/>
    <property type="match status" value="1"/>
</dbReference>
<dbReference type="Gene3D" id="3.90.1420.10">
    <property type="entry name" value="Rubisco LSMT, substrate-binding domain"/>
    <property type="match status" value="1"/>
</dbReference>
<dbReference type="Gene3D" id="3.90.1410.10">
    <property type="entry name" value="set domain protein methyltransferase, domain 1"/>
    <property type="match status" value="1"/>
</dbReference>
<dbReference type="InterPro" id="IPR015353">
    <property type="entry name" value="Rubisco_LSMT_subst-bd"/>
</dbReference>
<dbReference type="InterPro" id="IPR036464">
    <property type="entry name" value="Rubisco_LSMT_subst-bd_sf"/>
</dbReference>
<dbReference type="InterPro" id="IPR001214">
    <property type="entry name" value="SET_dom"/>
</dbReference>
<dbReference type="InterPro" id="IPR046341">
    <property type="entry name" value="SET_dom_sf"/>
</dbReference>
<dbReference type="InterPro" id="IPR016852">
    <property type="entry name" value="SET_MeTrfase"/>
</dbReference>
<dbReference type="InterPro" id="IPR050600">
    <property type="entry name" value="SETD3_SETD6_MTase"/>
</dbReference>
<dbReference type="InterPro" id="IPR044429">
    <property type="entry name" value="SETD4_SET"/>
</dbReference>
<dbReference type="PANTHER" id="PTHR13271:SF151">
    <property type="entry name" value="SET DOMAIN-CONTAINING PROTEIN 4"/>
    <property type="match status" value="1"/>
</dbReference>
<dbReference type="PANTHER" id="PTHR13271">
    <property type="entry name" value="UNCHARACTERIZED PUTATIVE METHYLTRANSFERASE"/>
    <property type="match status" value="1"/>
</dbReference>
<dbReference type="Pfam" id="PF09273">
    <property type="entry name" value="Rubis-subs-bind"/>
    <property type="match status" value="1"/>
</dbReference>
<dbReference type="Pfam" id="PF00856">
    <property type="entry name" value="SET"/>
    <property type="match status" value="1"/>
</dbReference>
<dbReference type="PIRSF" id="PIRSF027158">
    <property type="entry name" value="Lys_MTase_YDR198C_prd"/>
    <property type="match status" value="1"/>
</dbReference>
<dbReference type="SUPFAM" id="SSF82199">
    <property type="entry name" value="SET domain"/>
    <property type="match status" value="1"/>
</dbReference>
<dbReference type="PROSITE" id="PS50280">
    <property type="entry name" value="SET"/>
    <property type="match status" value="1"/>
</dbReference>
<evidence type="ECO:0000250" key="1">
    <source>
        <dbReference type="UniProtKB" id="P58467"/>
    </source>
</evidence>
<evidence type="ECO:0000255" key="2">
    <source>
        <dbReference type="PROSITE-ProRule" id="PRU00190"/>
    </source>
</evidence>
<evidence type="ECO:0000256" key="3">
    <source>
        <dbReference type="SAM" id="MobiDB-lite"/>
    </source>
</evidence>
<evidence type="ECO:0000269" key="4">
    <source>
    </source>
</evidence>
<evidence type="ECO:0000269" key="5">
    <source>
    </source>
</evidence>
<evidence type="ECO:0000269" key="6">
    <source>
    </source>
</evidence>
<evidence type="ECO:0000269" key="7">
    <source>
    </source>
</evidence>
<evidence type="ECO:0000269" key="8">
    <source>
    </source>
</evidence>
<evidence type="ECO:0000303" key="9">
    <source>
    </source>
</evidence>
<evidence type="ECO:0000303" key="10">
    <source>
    </source>
</evidence>
<evidence type="ECO:0000303" key="11">
    <source>
    </source>
</evidence>
<evidence type="ECO:0000303" key="12">
    <source>
    </source>
</evidence>
<evidence type="ECO:0000305" key="13"/>
<evidence type="ECO:0000312" key="14">
    <source>
        <dbReference type="HGNC" id="HGNC:1258"/>
    </source>
</evidence>
<proteinExistence type="evidence at protein level"/>
<protein>
    <recommendedName>
        <fullName evidence="13">SET domain-containing protein 4</fullName>
        <ecNumber evidence="6">2.1.1.-</ecNumber>
        <ecNumber evidence="1">2.1.1.364</ecNumber>
    </recommendedName>
</protein>
<reference key="1">
    <citation type="journal article" date="2001" name="Genomics">
        <title>From PREDs and open reading frames to cDNA isolation: revisiting the human chromosome 21 transcription map.</title>
        <authorList>
            <person name="Reymond A."/>
            <person name="Friedli M."/>
            <person name="Neergaard Henrichsen C."/>
            <person name="Chapot F."/>
            <person name="Deutsch S."/>
            <person name="Ucla C."/>
            <person name="Rossier C."/>
            <person name="Lyle R."/>
            <person name="Guipponi M."/>
            <person name="Antonarakis S.E."/>
        </authorList>
    </citation>
    <scope>NUCLEOTIDE SEQUENCE [MRNA] (ISOFORM B)</scope>
</reference>
<reference key="2">
    <citation type="journal article" date="2004" name="Nat. Genet.">
        <title>Complete sequencing and characterization of 21,243 full-length human cDNAs.</title>
        <authorList>
            <person name="Ota T."/>
            <person name="Suzuki Y."/>
            <person name="Nishikawa T."/>
            <person name="Otsuki T."/>
            <person name="Sugiyama T."/>
            <person name="Irie R."/>
            <person name="Wakamatsu A."/>
            <person name="Hayashi K."/>
            <person name="Sato H."/>
            <person name="Nagai K."/>
            <person name="Kimura K."/>
            <person name="Makita H."/>
            <person name="Sekine M."/>
            <person name="Obayashi M."/>
            <person name="Nishi T."/>
            <person name="Shibahara T."/>
            <person name="Tanaka T."/>
            <person name="Ishii S."/>
            <person name="Yamamoto J."/>
            <person name="Saito K."/>
            <person name="Kawai Y."/>
            <person name="Isono Y."/>
            <person name="Nakamura Y."/>
            <person name="Nagahari K."/>
            <person name="Murakami K."/>
            <person name="Yasuda T."/>
            <person name="Iwayanagi T."/>
            <person name="Wagatsuma M."/>
            <person name="Shiratori A."/>
            <person name="Sudo H."/>
            <person name="Hosoiri T."/>
            <person name="Kaku Y."/>
            <person name="Kodaira H."/>
            <person name="Kondo H."/>
            <person name="Sugawara M."/>
            <person name="Takahashi M."/>
            <person name="Kanda K."/>
            <person name="Yokoi T."/>
            <person name="Furuya T."/>
            <person name="Kikkawa E."/>
            <person name="Omura Y."/>
            <person name="Abe K."/>
            <person name="Kamihara K."/>
            <person name="Katsuta N."/>
            <person name="Sato K."/>
            <person name="Tanikawa M."/>
            <person name="Yamazaki M."/>
            <person name="Ninomiya K."/>
            <person name="Ishibashi T."/>
            <person name="Yamashita H."/>
            <person name="Murakawa K."/>
            <person name="Fujimori K."/>
            <person name="Tanai H."/>
            <person name="Kimata M."/>
            <person name="Watanabe M."/>
            <person name="Hiraoka S."/>
            <person name="Chiba Y."/>
            <person name="Ishida S."/>
            <person name="Ono Y."/>
            <person name="Takiguchi S."/>
            <person name="Watanabe S."/>
            <person name="Yosida M."/>
            <person name="Hotuta T."/>
            <person name="Kusano J."/>
            <person name="Kanehori K."/>
            <person name="Takahashi-Fujii A."/>
            <person name="Hara H."/>
            <person name="Tanase T.-O."/>
            <person name="Nomura Y."/>
            <person name="Togiya S."/>
            <person name="Komai F."/>
            <person name="Hara R."/>
            <person name="Takeuchi K."/>
            <person name="Arita M."/>
            <person name="Imose N."/>
            <person name="Musashino K."/>
            <person name="Yuuki H."/>
            <person name="Oshima A."/>
            <person name="Sasaki N."/>
            <person name="Aotsuka S."/>
            <person name="Yoshikawa Y."/>
            <person name="Matsunawa H."/>
            <person name="Ichihara T."/>
            <person name="Shiohata N."/>
            <person name="Sano S."/>
            <person name="Moriya S."/>
            <person name="Momiyama H."/>
            <person name="Satoh N."/>
            <person name="Takami S."/>
            <person name="Terashima Y."/>
            <person name="Suzuki O."/>
            <person name="Nakagawa S."/>
            <person name="Senoh A."/>
            <person name="Mizoguchi H."/>
            <person name="Goto Y."/>
            <person name="Shimizu F."/>
            <person name="Wakebe H."/>
            <person name="Hishigaki H."/>
            <person name="Watanabe T."/>
            <person name="Sugiyama A."/>
            <person name="Takemoto M."/>
            <person name="Kawakami B."/>
            <person name="Yamazaki M."/>
            <person name="Watanabe K."/>
            <person name="Kumagai A."/>
            <person name="Itakura S."/>
            <person name="Fukuzumi Y."/>
            <person name="Fujimori Y."/>
            <person name="Komiyama M."/>
            <person name="Tashiro H."/>
            <person name="Tanigami A."/>
            <person name="Fujiwara T."/>
            <person name="Ono T."/>
            <person name="Yamada K."/>
            <person name="Fujii Y."/>
            <person name="Ozaki K."/>
            <person name="Hirao M."/>
            <person name="Ohmori Y."/>
            <person name="Kawabata A."/>
            <person name="Hikiji T."/>
            <person name="Kobatake N."/>
            <person name="Inagaki H."/>
            <person name="Ikema Y."/>
            <person name="Okamoto S."/>
            <person name="Okitani R."/>
            <person name="Kawakami T."/>
            <person name="Noguchi S."/>
            <person name="Itoh T."/>
            <person name="Shigeta K."/>
            <person name="Senba T."/>
            <person name="Matsumura K."/>
            <person name="Nakajima Y."/>
            <person name="Mizuno T."/>
            <person name="Morinaga M."/>
            <person name="Sasaki M."/>
            <person name="Togashi T."/>
            <person name="Oyama M."/>
            <person name="Hata H."/>
            <person name="Watanabe M."/>
            <person name="Komatsu T."/>
            <person name="Mizushima-Sugano J."/>
            <person name="Satoh T."/>
            <person name="Shirai Y."/>
            <person name="Takahashi Y."/>
            <person name="Nakagawa K."/>
            <person name="Okumura K."/>
            <person name="Nagase T."/>
            <person name="Nomura N."/>
            <person name="Kikuchi H."/>
            <person name="Masuho Y."/>
            <person name="Yamashita R."/>
            <person name="Nakai K."/>
            <person name="Yada T."/>
            <person name="Nakamura Y."/>
            <person name="Ohara O."/>
            <person name="Isogai T."/>
            <person name="Sugano S."/>
        </authorList>
    </citation>
    <scope>NUCLEOTIDE SEQUENCE [LARGE SCALE MRNA] (ISOFORMS A AND B)</scope>
</reference>
<reference key="3">
    <citation type="journal article" date="2000" name="Nature">
        <title>The DNA sequence of human chromosome 21.</title>
        <authorList>
            <person name="Hattori M."/>
            <person name="Fujiyama A."/>
            <person name="Taylor T.D."/>
            <person name="Watanabe H."/>
            <person name="Yada T."/>
            <person name="Park H.-S."/>
            <person name="Toyoda A."/>
            <person name="Ishii K."/>
            <person name="Totoki Y."/>
            <person name="Choi D.-K."/>
            <person name="Groner Y."/>
            <person name="Soeda E."/>
            <person name="Ohki M."/>
            <person name="Takagi T."/>
            <person name="Sakaki Y."/>
            <person name="Taudien S."/>
            <person name="Blechschmidt K."/>
            <person name="Polley A."/>
            <person name="Menzel U."/>
            <person name="Delabar J."/>
            <person name="Kumpf K."/>
            <person name="Lehmann R."/>
            <person name="Patterson D."/>
            <person name="Reichwald K."/>
            <person name="Rump A."/>
            <person name="Schillhabel M."/>
            <person name="Schudy A."/>
            <person name="Zimmermann W."/>
            <person name="Rosenthal A."/>
            <person name="Kudoh J."/>
            <person name="Shibuya K."/>
            <person name="Kawasaki K."/>
            <person name="Asakawa S."/>
            <person name="Shintani A."/>
            <person name="Sasaki T."/>
            <person name="Nagamine K."/>
            <person name="Mitsuyama S."/>
            <person name="Antonarakis S.E."/>
            <person name="Minoshima S."/>
            <person name="Shimizu N."/>
            <person name="Nordsiek G."/>
            <person name="Hornischer K."/>
            <person name="Brandt P."/>
            <person name="Scharfe M."/>
            <person name="Schoen O."/>
            <person name="Desario A."/>
            <person name="Reichelt J."/>
            <person name="Kauer G."/>
            <person name="Bloecker H."/>
            <person name="Ramser J."/>
            <person name="Beck A."/>
            <person name="Klages S."/>
            <person name="Hennig S."/>
            <person name="Riesselmann L."/>
            <person name="Dagand E."/>
            <person name="Wehrmeyer S."/>
            <person name="Borzym K."/>
            <person name="Gardiner K."/>
            <person name="Nizetic D."/>
            <person name="Francis F."/>
            <person name="Lehrach H."/>
            <person name="Reinhardt R."/>
            <person name="Yaspo M.-L."/>
        </authorList>
    </citation>
    <scope>NUCLEOTIDE SEQUENCE [LARGE SCALE GENOMIC DNA]</scope>
</reference>
<reference key="4">
    <citation type="submission" date="2005-09" db="EMBL/GenBank/DDBJ databases">
        <authorList>
            <person name="Mural R.J."/>
            <person name="Istrail S."/>
            <person name="Sutton G.G."/>
            <person name="Florea L."/>
            <person name="Halpern A.L."/>
            <person name="Mobarry C.M."/>
            <person name="Lippert R."/>
            <person name="Walenz B."/>
            <person name="Shatkay H."/>
            <person name="Dew I."/>
            <person name="Miller J.R."/>
            <person name="Flanigan M.J."/>
            <person name="Edwards N.J."/>
            <person name="Bolanos R."/>
            <person name="Fasulo D."/>
            <person name="Halldorsson B.V."/>
            <person name="Hannenhalli S."/>
            <person name="Turner R."/>
            <person name="Yooseph S."/>
            <person name="Lu F."/>
            <person name="Nusskern D.R."/>
            <person name="Shue B.C."/>
            <person name="Zheng X.H."/>
            <person name="Zhong F."/>
            <person name="Delcher A.L."/>
            <person name="Huson D.H."/>
            <person name="Kravitz S.A."/>
            <person name="Mouchard L."/>
            <person name="Reinert K."/>
            <person name="Remington K.A."/>
            <person name="Clark A.G."/>
            <person name="Waterman M.S."/>
            <person name="Eichler E.E."/>
            <person name="Adams M.D."/>
            <person name="Hunkapiller M.W."/>
            <person name="Myers E.W."/>
            <person name="Venter J.C."/>
        </authorList>
    </citation>
    <scope>NUCLEOTIDE SEQUENCE [LARGE SCALE GENOMIC DNA]</scope>
</reference>
<reference key="5">
    <citation type="journal article" date="2004" name="Genome Res.">
        <title>The status, quality, and expansion of the NIH full-length cDNA project: the Mammalian Gene Collection (MGC).</title>
        <authorList>
            <consortium name="The MGC Project Team"/>
        </authorList>
    </citation>
    <scope>NUCLEOTIDE SEQUENCE [LARGE SCALE MRNA] (ISOFORMS A; 3 AND 4)</scope>
    <source>
        <tissue>Lung</tissue>
        <tissue>Testis</tissue>
    </source>
</reference>
<reference key="6">
    <citation type="journal article" date="2004" name="Genome Biol.">
        <title>An unappreciated role for RNA surveillance.</title>
        <authorList>
            <person name="Hillman R.T."/>
            <person name="Green R.E."/>
            <person name="Brenner S.E."/>
        </authorList>
    </citation>
    <scope>SPLICE ISOFORM(S) THAT ARE POTENTIAL NMD TARGET(S)</scope>
</reference>
<reference key="7">
    <citation type="journal article" date="2013" name="J. Cancer Sci. Ther.">
        <title>SET domain-containing protein 4 (SETD4) is a newly identified Cytosolic and nuclear lysine methyltransferase involved in breast cancer cell proliferation.</title>
        <authorList>
            <person name="Faria J.A."/>
            <person name="Correa N.C."/>
            <person name="de Andrade C."/>
            <person name="de Angelis Campos A.C."/>
            <person name="Dos Santos Samuel de Almeida R."/>
            <person name="Rodrigues T.S."/>
            <person name="de Goes A.M."/>
            <person name="Gomes D.A."/>
            <person name="Silva F.P."/>
        </authorList>
    </citation>
    <scope>SUBCELLULAR LOCATION</scope>
</reference>
<reference key="8">
    <citation type="journal article" date="2019" name="Cancer Res.">
        <title>SET domain-containing protein 4 epigenetically controls breast cancer stem cell quiescence.</title>
        <authorList>
            <person name="Ye S."/>
            <person name="Ding Y.F."/>
            <person name="Jia W.H."/>
            <person name="Liu X.L."/>
            <person name="Feng J.Y."/>
            <person name="Zhu Q."/>
            <person name="Cai S.L."/>
            <person name="Yang Y.S."/>
            <person name="Lu Q.Y."/>
            <person name="Huang X.T."/>
            <person name="Yang J.S."/>
            <person name="Jia S.N."/>
            <person name="Ding G.P."/>
            <person name="Wang Y.H."/>
            <person name="Zhou J.J."/>
            <person name="Chen Y.D."/>
            <person name="Yang W.J."/>
        </authorList>
    </citation>
    <scope>FUNCTION</scope>
    <scope>CATALYTIC ACTIVITY</scope>
    <scope>MUTAGENESIS OF GLY-61 AND ASP-233</scope>
</reference>
<reference key="9">
    <citation type="journal article" date="2006" name="Science">
        <title>The consensus coding sequences of human breast and colorectal cancers.</title>
        <authorList>
            <person name="Sjoeblom T."/>
            <person name="Jones S."/>
            <person name="Wood L.D."/>
            <person name="Parsons D.W."/>
            <person name="Lin J."/>
            <person name="Barber T.D."/>
            <person name="Mandelker D."/>
            <person name="Leary R.J."/>
            <person name="Ptak J."/>
            <person name="Silliman N."/>
            <person name="Szabo S."/>
            <person name="Buckhaults P."/>
            <person name="Farrell C."/>
            <person name="Meeh P."/>
            <person name="Markowitz S.D."/>
            <person name="Willis J."/>
            <person name="Dawson D."/>
            <person name="Willson J.K.V."/>
            <person name="Gazdar A.F."/>
            <person name="Hartigan J."/>
            <person name="Wu L."/>
            <person name="Liu C."/>
            <person name="Parmigiani G."/>
            <person name="Park B.H."/>
            <person name="Bachman K.E."/>
            <person name="Papadopoulos N."/>
            <person name="Vogelstein B."/>
            <person name="Kinzler K.W."/>
            <person name="Velculescu V.E."/>
        </authorList>
    </citation>
    <scope>VARIANT [LARGE SCALE ANALYSIS] GLY-420</scope>
</reference>
<reference key="10">
    <citation type="journal article" date="2022" name="Cell Rep.">
        <title>SETD4-mediated KU70 methylation suppresses apoptosis.</title>
        <authorList>
            <person name="Wang Y."/>
            <person name="Liu B."/>
            <person name="Lu H."/>
            <person name="Liu J."/>
            <person name="Romanienko P.J."/>
            <person name="Montelione G.T."/>
            <person name="Shen Z."/>
        </authorList>
    </citation>
    <scope>FUNCTION</scope>
    <scope>MUTAGENESIS OF TYR-272 AND TYR-284</scope>
</reference>
<reference key="11">
    <citation type="journal article" date="2023" name="J. Biol. Chem.">
        <title>TBK1-stabilized ZNF268a recruits SETD4 to methylate TBK1 for efficient interferon signaling.</title>
        <authorList>
            <person name="Liu Y."/>
            <person name="Yin W."/>
            <person name="Zeng X."/>
            <person name="Fan J."/>
            <person name="Liu C."/>
            <person name="Gao M."/>
            <person name="Huang Z."/>
            <person name="Sun G."/>
            <person name="Guo M."/>
        </authorList>
    </citation>
    <scope>FUNCTION</scope>
    <scope>SUBCELLULAR LOCATION</scope>
    <scope>INTERACTION WITH ZNF268 AND TBK1</scope>
    <scope>MUTAGENESIS OF 236-ASN-HIS-237</scope>
</reference>
<sequence length="440" mass="50416">MQKGKGRTSRIRRRKLCGSSESRGVNESHKSEFIELRKWLKARKFQDSNLAPACFPGTGRGLMSQTSLQEGQMIISLPESCLLTTDTVIRSYLGAYITKWKPPPSPLLALCTFLVSEKHAGHRSLWKPYLEILPKAYTCPVCLEPEVVNLLPKSLKAKAEEQRAHVQEFFASSRDFFSSLQPLFAEAVDSIFSYSALLWAWCTVNTRAVYLRPRQRECLSAEPDTCALAPYLDLLNHSPHVQVKAAFNEETHSYEIRTTSRWRKHEEVFICYGPHDNQRLFLEYGFVSVHNPHACVYVSREILVKYLPSTDKQMDKKISILKDHGYIENLTFGWDGPSWRLLTALKLLCLEAEKFTCWKKVLLGEVISDTNEKTSLDIAQKICYYFIEETNAVLQKVSHMKDEKEALINQLTLVESLWTEELKILRASAETLHSLQTAFT</sequence>
<keyword id="KW-0025">Alternative splicing</keyword>
<keyword id="KW-0963">Cytoplasm</keyword>
<keyword id="KW-0395">Inflammatory response</keyword>
<keyword id="KW-0489">Methyltransferase</keyword>
<keyword id="KW-0539">Nucleus</keyword>
<keyword id="KW-1267">Proteomics identification</keyword>
<keyword id="KW-1185">Reference proteome</keyword>
<keyword id="KW-0949">S-adenosyl-L-methionine</keyword>
<keyword id="KW-0808">Transferase</keyword>
<feature type="chain" id="PRO_0000079509" description="SET domain-containing protein 4">
    <location>
        <begin position="1"/>
        <end position="440"/>
    </location>
</feature>
<feature type="domain" description="SET" evidence="2">
    <location>
        <begin position="48"/>
        <end position="273"/>
    </location>
</feature>
<feature type="region of interest" description="Disordered" evidence="3">
    <location>
        <begin position="1"/>
        <end position="24"/>
    </location>
</feature>
<feature type="compositionally biased region" description="Basic residues" evidence="3">
    <location>
        <begin position="1"/>
        <end position="16"/>
    </location>
</feature>
<feature type="binding site" evidence="2">
    <location>
        <position position="272"/>
    </location>
    <ligand>
        <name>S-adenosyl-L-methionine</name>
        <dbReference type="ChEBI" id="CHEBI:59789"/>
    </ligand>
</feature>
<feature type="splice variant" id="VSP_026578" description="In isoform 3." evidence="11">
    <original>MQKGKGRTSRIRRRKLCGSSESRGV</original>
    <variation>M</variation>
    <location>
        <begin position="1"/>
        <end position="25"/>
    </location>
</feature>
<feature type="splice variant" id="VSP_004146" description="In isoform B." evidence="9 10">
    <original>EGQMIISLPESCLLTTDTVIRSYLGAYITKWKPPPSPLLALCTFLVSEKHAGHRSLWKPYLEILPKAYTCPVCLEPEVVNLLPKSLKAKAEEQRAHVQEFFASSRDFFSSLQPLFAEAVDSIFSYSALLWAWCTVNTRAVYLRPRQRECLSAEPDTCALAPYLDLLNHSPHVQVKAAFNEETHSYEIRTTSRWRKHEEVFICYGPHDNQRLFLEYGFVSVHNPHACVYVSREILVKYLPSTDKQMDKKISILKDHGYIENLTFGWDGPSWRLLTALKLLCLEAEKFTCWKKVLLGEVISDTNEKTSLDIAQKICYYFIEETNAVLQKVSHMKDEKEALINQLTLVESLWTEELKILRASAETLHSLQTAFT</original>
    <variation>VEASSISSAGAVHLFSFRKACWAPISLEALPGDFTQGVYLPCLFGAGSGEPSSQIFKSKG</variation>
    <location>
        <begin position="70"/>
        <end position="440"/>
    </location>
</feature>
<feature type="splice variant" id="VSP_054087" description="In isoform 4." evidence="11">
    <original>EILVKYL</original>
    <variation>GWNQLCS</variation>
    <location>
        <begin position="301"/>
        <end position="307"/>
    </location>
</feature>
<feature type="splice variant" id="VSP_054088" description="In isoform 4." evidence="11">
    <location>
        <begin position="308"/>
        <end position="440"/>
    </location>
</feature>
<feature type="sequence variant" id="VAR_021948" description="In dbSNP:rs2835239.">
    <original>I</original>
    <variation>V</variation>
    <location>
        <position position="387"/>
    </location>
</feature>
<feature type="sequence variant" id="VAR_035988" description="In a colorectal cancer sample; somatic mutation." evidence="4">
    <original>E</original>
    <variation>G</variation>
    <location>
        <position position="420"/>
    </location>
</feature>
<feature type="mutagenesis site" description="Abolished histone-lysine N-methyltransferase activity." evidence="6">
    <original>G</original>
    <variation>V</variation>
    <location>
        <position position="61"/>
    </location>
</feature>
<feature type="mutagenesis site" description="Abolished histone-lysine N-methyltransferase activity." evidence="6">
    <original>D</original>
    <variation>A</variation>
    <location>
        <position position="233"/>
    </location>
</feature>
<feature type="mutagenesis site" description="Loss of the ability to promote Sendai virus-induced IFNB1 promoter activation." evidence="8">
    <original>NH</original>
    <variation>AA</variation>
    <location>
        <begin position="236"/>
        <end position="237"/>
    </location>
</feature>
<feature type="mutagenesis site" description="Loss of N-methyltransferase activity toward XRCC6; when associated F-284." evidence="7">
    <original>Y</original>
    <variation>F</variation>
    <location>
        <position position="272"/>
    </location>
</feature>
<feature type="mutagenesis site" description="Loss of N-methyltransferase activity toward XRCC6; when associated F-272." evidence="7">
    <original>Y</original>
    <variation>F</variation>
    <location>
        <position position="284"/>
    </location>
</feature>
<feature type="sequence conflict" description="In Ref. 5; AAH02898." evidence="13" ref="5">
    <original>EILVKYLPSTDKQMDKKISILKDHGYIENLTFGWDGPSWRLLTALKLLCLEAEKFTCWKKVLLGEVISDTNEKTSLDIAQKICYYFIEETNAVLQKVSHMKDEKEALINQLTLVESLWTEELKILRASAETLHSLQTAFT</original>
    <variation>GWNQLCS</variation>
    <location>
        <begin position="301"/>
        <end position="440"/>
    </location>
</feature>